<keyword id="KW-0121">Carboxypeptidase</keyword>
<keyword id="KW-1015">Disulfide bond</keyword>
<keyword id="KW-0325">Glycoprotein</keyword>
<keyword id="KW-0378">Hydrolase</keyword>
<keyword id="KW-0645">Protease</keyword>
<keyword id="KW-1185">Reference proteome</keyword>
<keyword id="KW-0964">Secreted</keyword>
<keyword id="KW-0732">Signal</keyword>
<protein>
    <recommendedName>
        <fullName>Serine carboxypeptidase-like 38</fullName>
        <ecNumber>3.4.16.-</ecNumber>
    </recommendedName>
</protein>
<proteinExistence type="evidence at transcript level"/>
<comment type="function">
    <text evidence="1">Probable carboxypeptidase.</text>
</comment>
<comment type="subcellular location">
    <subcellularLocation>
        <location evidence="5">Secreted</location>
    </subcellularLocation>
</comment>
<comment type="tissue specificity">
    <text evidence="4">Expressed in seedlings, roots, leaves, flowers and siliques.</text>
</comment>
<comment type="similarity">
    <text evidence="5">Belongs to the peptidase S10 family.</text>
</comment>
<reference key="1">
    <citation type="journal article" date="1999" name="Nature">
        <title>Sequence and analysis of chromosome 2 of the plant Arabidopsis thaliana.</title>
        <authorList>
            <person name="Lin X."/>
            <person name="Kaul S."/>
            <person name="Rounsley S.D."/>
            <person name="Shea T.P."/>
            <person name="Benito M.-I."/>
            <person name="Town C.D."/>
            <person name="Fujii C.Y."/>
            <person name="Mason T.M."/>
            <person name="Bowman C.L."/>
            <person name="Barnstead M.E."/>
            <person name="Feldblyum T.V."/>
            <person name="Buell C.R."/>
            <person name="Ketchum K.A."/>
            <person name="Lee J.J."/>
            <person name="Ronning C.M."/>
            <person name="Koo H.L."/>
            <person name="Moffat K.S."/>
            <person name="Cronin L.A."/>
            <person name="Shen M."/>
            <person name="Pai G."/>
            <person name="Van Aken S."/>
            <person name="Umayam L."/>
            <person name="Tallon L.J."/>
            <person name="Gill J.E."/>
            <person name="Adams M.D."/>
            <person name="Carrera A.J."/>
            <person name="Creasy T.H."/>
            <person name="Goodman H.M."/>
            <person name="Somerville C.R."/>
            <person name="Copenhaver G.P."/>
            <person name="Preuss D."/>
            <person name="Nierman W.C."/>
            <person name="White O."/>
            <person name="Eisen J.A."/>
            <person name="Salzberg S.L."/>
            <person name="Fraser C.M."/>
            <person name="Venter J.C."/>
        </authorList>
    </citation>
    <scope>NUCLEOTIDE SEQUENCE [LARGE SCALE GENOMIC DNA]</scope>
    <source>
        <strain>cv. Columbia</strain>
    </source>
</reference>
<reference key="2">
    <citation type="journal article" date="2017" name="Plant J.">
        <title>Araport11: a complete reannotation of the Arabidopsis thaliana reference genome.</title>
        <authorList>
            <person name="Cheng C.Y."/>
            <person name="Krishnakumar V."/>
            <person name="Chan A.P."/>
            <person name="Thibaud-Nissen F."/>
            <person name="Schobel S."/>
            <person name="Town C.D."/>
        </authorList>
    </citation>
    <scope>GENOME REANNOTATION</scope>
    <source>
        <strain>cv. Columbia</strain>
    </source>
</reference>
<reference key="3">
    <citation type="journal article" date="2003" name="Science">
        <title>Empirical analysis of transcriptional activity in the Arabidopsis genome.</title>
        <authorList>
            <person name="Yamada K."/>
            <person name="Lim J."/>
            <person name="Dale J.M."/>
            <person name="Chen H."/>
            <person name="Shinn P."/>
            <person name="Palm C.J."/>
            <person name="Southwick A.M."/>
            <person name="Wu H.C."/>
            <person name="Kim C.J."/>
            <person name="Nguyen M."/>
            <person name="Pham P.K."/>
            <person name="Cheuk R.F."/>
            <person name="Karlin-Newmann G."/>
            <person name="Liu S.X."/>
            <person name="Lam B."/>
            <person name="Sakano H."/>
            <person name="Wu T."/>
            <person name="Yu G."/>
            <person name="Miranda M."/>
            <person name="Quach H.L."/>
            <person name="Tripp M."/>
            <person name="Chang C.H."/>
            <person name="Lee J.M."/>
            <person name="Toriumi M.J."/>
            <person name="Chan M.M."/>
            <person name="Tang C.C."/>
            <person name="Onodera C.S."/>
            <person name="Deng J.M."/>
            <person name="Akiyama K."/>
            <person name="Ansari Y."/>
            <person name="Arakawa T."/>
            <person name="Banh J."/>
            <person name="Banno F."/>
            <person name="Bowser L."/>
            <person name="Brooks S.Y."/>
            <person name="Carninci P."/>
            <person name="Chao Q."/>
            <person name="Choy N."/>
            <person name="Enju A."/>
            <person name="Goldsmith A.D."/>
            <person name="Gurjal M."/>
            <person name="Hansen N.F."/>
            <person name="Hayashizaki Y."/>
            <person name="Johnson-Hopson C."/>
            <person name="Hsuan V.W."/>
            <person name="Iida K."/>
            <person name="Karnes M."/>
            <person name="Khan S."/>
            <person name="Koesema E."/>
            <person name="Ishida J."/>
            <person name="Jiang P.X."/>
            <person name="Jones T."/>
            <person name="Kawai J."/>
            <person name="Kamiya A."/>
            <person name="Meyers C."/>
            <person name="Nakajima M."/>
            <person name="Narusaka M."/>
            <person name="Seki M."/>
            <person name="Sakurai T."/>
            <person name="Satou M."/>
            <person name="Tamse R."/>
            <person name="Vaysberg M."/>
            <person name="Wallender E.K."/>
            <person name="Wong C."/>
            <person name="Yamamura Y."/>
            <person name="Yuan S."/>
            <person name="Shinozaki K."/>
            <person name="Davis R.W."/>
            <person name="Theologis A."/>
            <person name="Ecker J.R."/>
        </authorList>
    </citation>
    <scope>NUCLEOTIDE SEQUENCE [LARGE SCALE MRNA]</scope>
    <source>
        <strain>cv. Columbia</strain>
    </source>
</reference>
<reference key="4">
    <citation type="journal article" date="2005" name="Plant Physiol.">
        <title>An expression and bioinformatics analysis of the Arabidopsis serine carboxypeptidase-like gene family.</title>
        <authorList>
            <person name="Fraser C.M."/>
            <person name="Rider L.W."/>
            <person name="Chapple C."/>
        </authorList>
    </citation>
    <scope>GENE FAMILY</scope>
    <scope>TISSUE SPECIFICITY</scope>
    <scope>NOMENCLATURE</scope>
</reference>
<evidence type="ECO:0000250" key="1"/>
<evidence type="ECO:0000255" key="2"/>
<evidence type="ECO:0000255" key="3">
    <source>
        <dbReference type="PROSITE-ProRule" id="PRU10075"/>
    </source>
</evidence>
<evidence type="ECO:0000269" key="4">
    <source>
    </source>
</evidence>
<evidence type="ECO:0000305" key="5"/>
<accession>Q9ZUG3</accession>
<name>SCP38_ARATH</name>
<gene>
    <name type="primary">SCPL38</name>
    <name type="ordered locus">At2g05850</name>
    <name type="ORF">T6P5.5</name>
</gene>
<organism>
    <name type="scientific">Arabidopsis thaliana</name>
    <name type="common">Mouse-ear cress</name>
    <dbReference type="NCBI Taxonomy" id="3702"/>
    <lineage>
        <taxon>Eukaryota</taxon>
        <taxon>Viridiplantae</taxon>
        <taxon>Streptophyta</taxon>
        <taxon>Embryophyta</taxon>
        <taxon>Tracheophyta</taxon>
        <taxon>Spermatophyta</taxon>
        <taxon>Magnoliopsida</taxon>
        <taxon>eudicotyledons</taxon>
        <taxon>Gunneridae</taxon>
        <taxon>Pentapetalae</taxon>
        <taxon>rosids</taxon>
        <taxon>malvids</taxon>
        <taxon>Brassicales</taxon>
        <taxon>Brassicaceae</taxon>
        <taxon>Camelineae</taxon>
        <taxon>Arabidopsis</taxon>
    </lineage>
</organism>
<feature type="signal peptide" evidence="2">
    <location>
        <begin position="1"/>
        <end position="20"/>
    </location>
</feature>
<feature type="chain" id="PRO_0000274653" description="Serine carboxypeptidase-like 38">
    <location>
        <begin position="21"/>
        <end position="487"/>
    </location>
</feature>
<feature type="active site" evidence="3">
    <location>
        <position position="215"/>
    </location>
</feature>
<feature type="active site" evidence="3">
    <location>
        <position position="407"/>
    </location>
</feature>
<feature type="active site" evidence="3">
    <location>
        <position position="460"/>
    </location>
</feature>
<feature type="glycosylation site" description="N-linked (GlcNAc...) asparagine" evidence="2">
    <location>
        <position position="233"/>
    </location>
</feature>
<feature type="glycosylation site" description="N-linked (GlcNAc...) asparagine" evidence="2">
    <location>
        <position position="317"/>
    </location>
</feature>
<feature type="glycosylation site" description="N-linked (GlcNAc...) asparagine" evidence="2">
    <location>
        <position position="357"/>
    </location>
</feature>
<feature type="glycosylation site" description="N-linked (GlcNAc...) asparagine" evidence="2">
    <location>
        <position position="423"/>
    </location>
</feature>
<feature type="glycosylation site" description="N-linked (GlcNAc...) asparagine" evidence="2">
    <location>
        <position position="449"/>
    </location>
</feature>
<feature type="disulfide bond" evidence="1">
    <location>
        <begin position="119"/>
        <end position="368"/>
    </location>
</feature>
<feature type="disulfide bond" evidence="1">
    <location>
        <begin position="280"/>
        <end position="290"/>
    </location>
</feature>
<feature type="disulfide bond" evidence="1">
    <location>
        <begin position="315"/>
        <end position="336"/>
    </location>
</feature>
<dbReference type="EC" id="3.4.16.-"/>
<dbReference type="EMBL" id="AC005970">
    <property type="protein sequence ID" value="AAC95162.1"/>
    <property type="molecule type" value="Genomic_DNA"/>
</dbReference>
<dbReference type="EMBL" id="CP002685">
    <property type="protein sequence ID" value="AEC05981.1"/>
    <property type="molecule type" value="Genomic_DNA"/>
</dbReference>
<dbReference type="EMBL" id="AY065440">
    <property type="protein sequence ID" value="AAL38881.1"/>
    <property type="molecule type" value="mRNA"/>
</dbReference>
<dbReference type="EMBL" id="BT000980">
    <property type="protein sequence ID" value="AAN41380.1"/>
    <property type="molecule type" value="mRNA"/>
</dbReference>
<dbReference type="PIR" id="B84472">
    <property type="entry name" value="B84472"/>
</dbReference>
<dbReference type="RefSeq" id="NP_178642.1">
    <property type="nucleotide sequence ID" value="NM_126598.4"/>
</dbReference>
<dbReference type="SMR" id="Q9ZUG3"/>
<dbReference type="STRING" id="3702.Q9ZUG3"/>
<dbReference type="ESTHER" id="arath-scp38">
    <property type="family name" value="Carboxypeptidase_S10"/>
</dbReference>
<dbReference type="MEROPS" id="S10.A29"/>
<dbReference type="GlyCosmos" id="Q9ZUG3">
    <property type="glycosylation" value="5 sites, No reported glycans"/>
</dbReference>
<dbReference type="GlyGen" id="Q9ZUG3">
    <property type="glycosylation" value="5 sites"/>
</dbReference>
<dbReference type="PaxDb" id="3702-AT2G05850.1"/>
<dbReference type="ProteomicsDB" id="226609"/>
<dbReference type="EnsemblPlants" id="AT2G05850.1">
    <property type="protein sequence ID" value="AT2G05850.1"/>
    <property type="gene ID" value="AT2G05850"/>
</dbReference>
<dbReference type="GeneID" id="815137"/>
<dbReference type="Gramene" id="AT2G05850.1">
    <property type="protein sequence ID" value="AT2G05850.1"/>
    <property type="gene ID" value="AT2G05850"/>
</dbReference>
<dbReference type="KEGG" id="ath:AT2G05850"/>
<dbReference type="Araport" id="AT2G05850"/>
<dbReference type="TAIR" id="AT2G05850">
    <property type="gene designation" value="SCPL38"/>
</dbReference>
<dbReference type="eggNOG" id="KOG1282">
    <property type="taxonomic scope" value="Eukaryota"/>
</dbReference>
<dbReference type="HOGENOM" id="CLU_008523_13_0_1"/>
<dbReference type="InParanoid" id="Q9ZUG3"/>
<dbReference type="OMA" id="NVQEAMH"/>
<dbReference type="PhylomeDB" id="Q9ZUG3"/>
<dbReference type="PRO" id="PR:Q9ZUG3"/>
<dbReference type="Proteomes" id="UP000006548">
    <property type="component" value="Chromosome 2"/>
</dbReference>
<dbReference type="ExpressionAtlas" id="Q9ZUG3">
    <property type="expression patterns" value="baseline and differential"/>
</dbReference>
<dbReference type="GO" id="GO:0005576">
    <property type="term" value="C:extracellular region"/>
    <property type="evidence" value="ECO:0007669"/>
    <property type="project" value="UniProtKB-SubCell"/>
</dbReference>
<dbReference type="GO" id="GO:0004185">
    <property type="term" value="F:serine-type carboxypeptidase activity"/>
    <property type="evidence" value="ECO:0007669"/>
    <property type="project" value="InterPro"/>
</dbReference>
<dbReference type="GO" id="GO:0006508">
    <property type="term" value="P:proteolysis"/>
    <property type="evidence" value="ECO:0007669"/>
    <property type="project" value="UniProtKB-KW"/>
</dbReference>
<dbReference type="FunFam" id="3.40.50.11320:FF:000002">
    <property type="entry name" value="Carboxypeptidase"/>
    <property type="match status" value="1"/>
</dbReference>
<dbReference type="FunFam" id="3.40.50.1820:FF:000211">
    <property type="entry name" value="Carboxypeptidase"/>
    <property type="match status" value="1"/>
</dbReference>
<dbReference type="Gene3D" id="3.40.50.11320">
    <property type="match status" value="1"/>
</dbReference>
<dbReference type="Gene3D" id="6.10.250.940">
    <property type="match status" value="1"/>
</dbReference>
<dbReference type="Gene3D" id="3.40.50.1820">
    <property type="entry name" value="alpha/beta hydrolase"/>
    <property type="match status" value="1"/>
</dbReference>
<dbReference type="InterPro" id="IPR029058">
    <property type="entry name" value="AB_hydrolase_fold"/>
</dbReference>
<dbReference type="InterPro" id="IPR001563">
    <property type="entry name" value="Peptidase_S10"/>
</dbReference>
<dbReference type="InterPro" id="IPR033124">
    <property type="entry name" value="Ser_caboxypep_his_AS"/>
</dbReference>
<dbReference type="PANTHER" id="PTHR11802:SF132">
    <property type="entry name" value="SERINE CARBOXYPEPTIDASE-LIKE 36-RELATED"/>
    <property type="match status" value="1"/>
</dbReference>
<dbReference type="PANTHER" id="PTHR11802">
    <property type="entry name" value="SERINE PROTEASE FAMILY S10 SERINE CARBOXYPEPTIDASE"/>
    <property type="match status" value="1"/>
</dbReference>
<dbReference type="Pfam" id="PF00450">
    <property type="entry name" value="Peptidase_S10"/>
    <property type="match status" value="1"/>
</dbReference>
<dbReference type="PRINTS" id="PR00724">
    <property type="entry name" value="CRBOXYPTASEC"/>
</dbReference>
<dbReference type="SUPFAM" id="SSF53474">
    <property type="entry name" value="alpha/beta-Hydrolases"/>
    <property type="match status" value="1"/>
</dbReference>
<dbReference type="PROSITE" id="PS00560">
    <property type="entry name" value="CARBOXYPEPT_SER_HIS"/>
    <property type="match status" value="1"/>
</dbReference>
<sequence length="487" mass="54731">MGKQQDWSVTACIFLSLSLASQIHCSSQTHFPSHKGGAGLSGDTSHFNSVSRENVLSLKEKDLIEKLPGQPSGISFRQYGGYVAVNEPATRFLYYYFVEAIKPSKSTPLVLWFNGGPGCSSVGFGAFEELGPFRVHSDGKTLYRNPYSWNNEANMLFFEGPISVGFSYSSTPFDWEIFGEQADKLTAEDNYMFLVNWLERFPEYKGRDVYISGQSYAGHYIPQLAQIILHRNNQTFINLRGISIGNPGLDLLIEADNENKFILSHGLVSQKDFEEYSKVCDFANYDMDECPKIMPKFSIEHNKHLDVYNIYAPVCLNSTLSSEPKKCTTIMEVDPCRSNYVKAYLNSENVQEAMHANTTKLPYEWKACNHYLNSVWIDADKDASMVPILHDLMGEGVRVLVYSGDVDAAIPFTATMAVLKTMNLTVVNEWRPWFTGGQLGGFTEDYERNLTYATVKGSGHSVPLDQPVHALNLFTSFIRNTPLPQTP</sequence>